<name>KEFB_SHISS</name>
<reference key="1">
    <citation type="journal article" date="2005" name="Nucleic Acids Res.">
        <title>Genome dynamics and diversity of Shigella species, the etiologic agents of bacillary dysentery.</title>
        <authorList>
            <person name="Yang F."/>
            <person name="Yang J."/>
            <person name="Zhang X."/>
            <person name="Chen L."/>
            <person name="Jiang Y."/>
            <person name="Yan Y."/>
            <person name="Tang X."/>
            <person name="Wang J."/>
            <person name="Xiong Z."/>
            <person name="Dong J."/>
            <person name="Xue Y."/>
            <person name="Zhu Y."/>
            <person name="Xu X."/>
            <person name="Sun L."/>
            <person name="Chen S."/>
            <person name="Nie H."/>
            <person name="Peng J."/>
            <person name="Xu J."/>
            <person name="Wang Y."/>
            <person name="Yuan Z."/>
            <person name="Wen Y."/>
            <person name="Yao Z."/>
            <person name="Shen Y."/>
            <person name="Qiang B."/>
            <person name="Hou Y."/>
            <person name="Yu J."/>
            <person name="Jin Q."/>
        </authorList>
    </citation>
    <scope>NUCLEOTIDE SEQUENCE [LARGE SCALE GENOMIC DNA]</scope>
    <source>
        <strain>Ss046</strain>
    </source>
</reference>
<feature type="chain" id="PRO_0000301534" description="Glutathione-regulated potassium-efflux system protein KefB">
    <location>
        <begin position="1"/>
        <end position="601"/>
    </location>
</feature>
<feature type="transmembrane region" description="Helical" evidence="1">
    <location>
        <begin position="4"/>
        <end position="24"/>
    </location>
</feature>
<feature type="transmembrane region" description="Helical" evidence="1">
    <location>
        <begin position="29"/>
        <end position="49"/>
    </location>
</feature>
<feature type="transmembrane region" description="Helical" evidence="1">
    <location>
        <begin position="55"/>
        <end position="75"/>
    </location>
</feature>
<feature type="transmembrane region" description="Helical" evidence="1">
    <location>
        <begin position="87"/>
        <end position="107"/>
    </location>
</feature>
<feature type="transmembrane region" description="Helical" evidence="1">
    <location>
        <begin position="115"/>
        <end position="135"/>
    </location>
</feature>
<feature type="transmembrane region" description="Helical" evidence="1">
    <location>
        <begin position="152"/>
        <end position="172"/>
    </location>
</feature>
<feature type="transmembrane region" description="Helical" evidence="1">
    <location>
        <begin position="177"/>
        <end position="197"/>
    </location>
</feature>
<feature type="transmembrane region" description="Helical" evidence="1">
    <location>
        <begin position="207"/>
        <end position="227"/>
    </location>
</feature>
<feature type="transmembrane region" description="Helical" evidence="1">
    <location>
        <begin position="230"/>
        <end position="250"/>
    </location>
</feature>
<feature type="transmembrane region" description="Helical" evidence="1">
    <location>
        <begin position="268"/>
        <end position="288"/>
    </location>
</feature>
<feature type="transmembrane region" description="Helical" evidence="1">
    <location>
        <begin position="291"/>
        <end position="311"/>
    </location>
</feature>
<feature type="transmembrane region" description="Helical" evidence="1">
    <location>
        <begin position="324"/>
        <end position="344"/>
    </location>
</feature>
<feature type="transmembrane region" description="Helical" evidence="1">
    <location>
        <begin position="356"/>
        <end position="376"/>
    </location>
</feature>
<feature type="domain" description="RCK N-terminal" evidence="2">
    <location>
        <begin position="400"/>
        <end position="519"/>
    </location>
</feature>
<evidence type="ECO:0000255" key="1">
    <source>
        <dbReference type="HAMAP-Rule" id="MF_01412"/>
    </source>
</evidence>
<evidence type="ECO:0000255" key="2">
    <source>
        <dbReference type="PROSITE-ProRule" id="PRU00543"/>
    </source>
</evidence>
<protein>
    <recommendedName>
        <fullName evidence="1">Glutathione-regulated potassium-efflux system protein KefB</fullName>
    </recommendedName>
    <alternativeName>
        <fullName evidence="1">K(+)/H(+) antiporter</fullName>
    </alternativeName>
</protein>
<accession>Q3YWS1</accession>
<sequence length="601" mass="66425">MEGSDFLLAGVLFLFAAVAAVPLASRLGIGAVLGYLLAGIAIGPWGLGFISDVDEILHFSELGVVFLMFIIGLELNPSKLWQLRRSIFGVGAAQVLLSAALLAGLLMLTDFAWQAAVVGGIGLAMSSTAMALQLMREKGMNRSESGQLGFSVLLFQDLAVIPALALVPLLAGSADEHFDWMKIGMKVLAFVGMLIGGRYLLRPVFRFIAASGVREVFTAATLLLVLGSALFMDALGLSMALGTFIAGVLLAESEYRHELETAIDPFKGLLLGLFFISVGMSLNLGVLYTHLLWVVISVVVLVAVKILVLYLLARLYGVRSSERMQFAGVLSQGGEFAFVLFSTASSQRLFQGDQMALLLVTVTLSMMTTPLLMKLVDKWLSRQFNGPEEEDEKPWVNDDKPQVIVVGFGRFGQVIGRLLMANKMRITVLERDISAVNLMRKYGYKVYYGDATQVDLLRSAGAEAAESIVITCNEPEDTMKLVEICQQHFPHLHILARARGRVEAHELLQAGVTQFSRETFSSALELGRKTLVTLGMHPHQAQRAQLHFRRLDMRMLRELIPMHADTVQISRAREARRELEEIFQREMQQERRQLDGWDEFE</sequence>
<proteinExistence type="inferred from homology"/>
<keyword id="KW-0050">Antiport</keyword>
<keyword id="KW-0997">Cell inner membrane</keyword>
<keyword id="KW-1003">Cell membrane</keyword>
<keyword id="KW-0406">Ion transport</keyword>
<keyword id="KW-0472">Membrane</keyword>
<keyword id="KW-0630">Potassium</keyword>
<keyword id="KW-0633">Potassium transport</keyword>
<keyword id="KW-1185">Reference proteome</keyword>
<keyword id="KW-0812">Transmembrane</keyword>
<keyword id="KW-1133">Transmembrane helix</keyword>
<keyword id="KW-0813">Transport</keyword>
<comment type="function">
    <text evidence="1">Pore-forming subunit of a potassium efflux system that confers protection against electrophiles. Catalyzes K(+)/H(+) antiport.</text>
</comment>
<comment type="subunit">
    <text evidence="1">Interacts with the regulatory subunit KefG.</text>
</comment>
<comment type="subcellular location">
    <subcellularLocation>
        <location evidence="1">Cell inner membrane</location>
        <topology evidence="1">Multi-pass membrane protein</topology>
    </subcellularLocation>
</comment>
<comment type="similarity">
    <text evidence="1">Belongs to the monovalent cation:proton antiporter 2 (CPA2) transporter (TC 2.A.37) family. KefB subfamily.</text>
</comment>
<dbReference type="EMBL" id="CP000038">
    <property type="protein sequence ID" value="AAZ90041.1"/>
    <property type="molecule type" value="Genomic_DNA"/>
</dbReference>
<dbReference type="RefSeq" id="WP_000399122.1">
    <property type="nucleotide sequence ID" value="NC_007384.1"/>
</dbReference>
<dbReference type="SMR" id="Q3YWS1"/>
<dbReference type="GeneID" id="93778647"/>
<dbReference type="KEGG" id="ssn:SSON_3481"/>
<dbReference type="HOGENOM" id="CLU_005126_9_3_6"/>
<dbReference type="Proteomes" id="UP000002529">
    <property type="component" value="Chromosome"/>
</dbReference>
<dbReference type="GO" id="GO:0005886">
    <property type="term" value="C:plasma membrane"/>
    <property type="evidence" value="ECO:0007669"/>
    <property type="project" value="UniProtKB-SubCell"/>
</dbReference>
<dbReference type="GO" id="GO:0015503">
    <property type="term" value="F:glutathione-regulated potassium exporter activity"/>
    <property type="evidence" value="ECO:0007669"/>
    <property type="project" value="UniProtKB-UniRule"/>
</dbReference>
<dbReference type="GO" id="GO:1902600">
    <property type="term" value="P:proton transmembrane transport"/>
    <property type="evidence" value="ECO:0007669"/>
    <property type="project" value="InterPro"/>
</dbReference>
<dbReference type="FunFam" id="1.20.1530.20:FF:000001">
    <property type="entry name" value="Glutathione-regulated potassium-efflux system protein KefB"/>
    <property type="match status" value="1"/>
</dbReference>
<dbReference type="FunFam" id="3.40.50.720:FF:000036">
    <property type="entry name" value="Glutathione-regulated potassium-efflux system protein KefB"/>
    <property type="match status" value="1"/>
</dbReference>
<dbReference type="Gene3D" id="1.20.1530.20">
    <property type="match status" value="1"/>
</dbReference>
<dbReference type="Gene3D" id="3.40.50.720">
    <property type="entry name" value="NAD(P)-binding Rossmann-like Domain"/>
    <property type="match status" value="1"/>
</dbReference>
<dbReference type="HAMAP" id="MF_01412">
    <property type="entry name" value="K_H_efflux_KefB"/>
    <property type="match status" value="1"/>
</dbReference>
<dbReference type="InterPro" id="IPR006153">
    <property type="entry name" value="Cation/H_exchanger_TM"/>
</dbReference>
<dbReference type="InterPro" id="IPR004771">
    <property type="entry name" value="K/H_exchanger"/>
</dbReference>
<dbReference type="InterPro" id="IPR020884">
    <property type="entry name" value="K_H_efflux_KefB"/>
</dbReference>
<dbReference type="InterPro" id="IPR038770">
    <property type="entry name" value="Na+/solute_symporter_sf"/>
</dbReference>
<dbReference type="InterPro" id="IPR036291">
    <property type="entry name" value="NAD(P)-bd_dom_sf"/>
</dbReference>
<dbReference type="InterPro" id="IPR003148">
    <property type="entry name" value="RCK_N"/>
</dbReference>
<dbReference type="NCBIfam" id="TIGR00932">
    <property type="entry name" value="2a37"/>
    <property type="match status" value="1"/>
</dbReference>
<dbReference type="NCBIfam" id="NF002973">
    <property type="entry name" value="PRK03659.1"/>
    <property type="match status" value="1"/>
</dbReference>
<dbReference type="PANTHER" id="PTHR46157">
    <property type="entry name" value="K(+) EFFLUX ANTIPORTER 3, CHLOROPLASTIC"/>
    <property type="match status" value="1"/>
</dbReference>
<dbReference type="PANTHER" id="PTHR46157:SF4">
    <property type="entry name" value="K(+) EFFLUX ANTIPORTER 3, CHLOROPLASTIC"/>
    <property type="match status" value="1"/>
</dbReference>
<dbReference type="Pfam" id="PF00999">
    <property type="entry name" value="Na_H_Exchanger"/>
    <property type="match status" value="1"/>
</dbReference>
<dbReference type="Pfam" id="PF02254">
    <property type="entry name" value="TrkA_N"/>
    <property type="match status" value="1"/>
</dbReference>
<dbReference type="SUPFAM" id="SSF51735">
    <property type="entry name" value="NAD(P)-binding Rossmann-fold domains"/>
    <property type="match status" value="1"/>
</dbReference>
<dbReference type="PROSITE" id="PS51201">
    <property type="entry name" value="RCK_N"/>
    <property type="match status" value="1"/>
</dbReference>
<organism>
    <name type="scientific">Shigella sonnei (strain Ss046)</name>
    <dbReference type="NCBI Taxonomy" id="300269"/>
    <lineage>
        <taxon>Bacteria</taxon>
        <taxon>Pseudomonadati</taxon>
        <taxon>Pseudomonadota</taxon>
        <taxon>Gammaproteobacteria</taxon>
        <taxon>Enterobacterales</taxon>
        <taxon>Enterobacteriaceae</taxon>
        <taxon>Shigella</taxon>
    </lineage>
</organism>
<gene>
    <name evidence="1" type="primary">kefB</name>
    <name type="ordered locus">SSON_3481</name>
</gene>